<protein>
    <recommendedName>
        <fullName>Non-structural protein ORF4b</fullName>
        <shortName>ORF4b</shortName>
    </recommendedName>
</protein>
<proteinExistence type="inferred from homology"/>
<evidence type="ECO:0000250" key="1">
    <source>
        <dbReference type="UniProtKB" id="K9N643"/>
    </source>
</evidence>
<evidence type="ECO:0000269" key="2">
    <source>
    </source>
</evidence>
<organismHost>
    <name type="scientific">Tylonycteris pachypus</name>
    <name type="common">Lesser bamboo bat</name>
    <name type="synonym">Vespertilio pachypus</name>
    <dbReference type="NCBI Taxonomy" id="258959"/>
</organismHost>
<accession>A3EX97</accession>
<keyword id="KW-1035">Host cytoplasm</keyword>
<keyword id="KW-1048">Host nucleus</keyword>
<keyword id="KW-0945">Host-virus interaction</keyword>
<keyword id="KW-1224">Inhibition of host IKBKE by virus</keyword>
<keyword id="KW-1090">Inhibition of host innate immune response by virus</keyword>
<keyword id="KW-1113">Inhibition of host RLR pathway by virus</keyword>
<keyword id="KW-1185">Reference proteome</keyword>
<keyword id="KW-0899">Viral immunoevasion</keyword>
<name>ORF4B_BCHK4</name>
<organism>
    <name type="scientific">Bat coronavirus HKU4</name>
    <name type="common">BtCoV</name>
    <name type="synonym">BtCoV/HKU4/2004</name>
    <dbReference type="NCBI Taxonomy" id="694007"/>
    <lineage>
        <taxon>Viruses</taxon>
        <taxon>Riboviria</taxon>
        <taxon>Orthornavirae</taxon>
        <taxon>Pisuviricota</taxon>
        <taxon>Pisoniviricetes</taxon>
        <taxon>Nidovirales</taxon>
        <taxon>Cornidovirineae</taxon>
        <taxon>Coronaviridae</taxon>
        <taxon>Orthocoronavirinae</taxon>
        <taxon>Betacoronavirus</taxon>
        <taxon>Merbecovirus</taxon>
    </lineage>
</organism>
<reference key="1">
    <citation type="journal article" date="2007" name="J. Virol.">
        <title>Comparative analysis of twelve genomes of three novel group 2c and group 2d coronaviruses reveals unique group and subgroup features.</title>
        <authorList>
            <person name="Woo P.C.Y."/>
            <person name="Wang M."/>
            <person name="Lau S.K.P."/>
            <person name="Xu H.F."/>
            <person name="Poon R.W.S."/>
            <person name="Guo R."/>
            <person name="Wong B.H.L."/>
            <person name="Gao K."/>
            <person name="Tsoi H.-W."/>
            <person name="Huang Y."/>
            <person name="Li K.S.M."/>
            <person name="Lam C.S.F."/>
            <person name="Chan K.-H."/>
            <person name="Zheng B.-J."/>
            <person name="Yuen K.-Y."/>
        </authorList>
    </citation>
    <scope>NUCLEOTIDE SEQUENCE [GENOMIC RNA]</scope>
    <source>
        <strain>Isolate HKU4-1</strain>
    </source>
</reference>
<reference key="2">
    <citation type="journal article" date="2014" name="J. Gen. Virol.">
        <title>The ORF4b-encoded accessory proteins of Middle East respiratory syndrome coronavirus and two related bat coronaviruses localize to the nucleus and inhibit innate immune signalling.</title>
        <authorList>
            <person name="Matthews K.L."/>
            <person name="Coleman C.M."/>
            <person name="van der Meer Y."/>
            <person name="Snijder E.J."/>
            <person name="Frieman M.B."/>
        </authorList>
    </citation>
    <scope>FUNCTION</scope>
    <scope>SUBCELLULAR LOCATION</scope>
</reference>
<dbReference type="EMBL" id="EF065505">
    <property type="protein sequence ID" value="ABN10842.1"/>
    <property type="molecule type" value="Genomic_RNA"/>
</dbReference>
<dbReference type="KEGG" id="vg:4835994"/>
<dbReference type="OrthoDB" id="20801at10239"/>
<dbReference type="Proteomes" id="UP000006574">
    <property type="component" value="Genome"/>
</dbReference>
<dbReference type="GO" id="GO:0030430">
    <property type="term" value="C:host cell cytoplasm"/>
    <property type="evidence" value="ECO:0000314"/>
    <property type="project" value="UniProtKB"/>
</dbReference>
<dbReference type="GO" id="GO:0044196">
    <property type="term" value="C:host cell nucleolus"/>
    <property type="evidence" value="ECO:0007669"/>
    <property type="project" value="UniProtKB-SubCell"/>
</dbReference>
<dbReference type="GO" id="GO:0042025">
    <property type="term" value="C:host cell nucleus"/>
    <property type="evidence" value="ECO:0000314"/>
    <property type="project" value="UniProtKB"/>
</dbReference>
<dbReference type="GO" id="GO:0039724">
    <property type="term" value="P:symbiont-mediated suppression of host cytoplasmic pattern recognition receptor signaling pathway via inhibition of IKBKE activity"/>
    <property type="evidence" value="ECO:0007669"/>
    <property type="project" value="UniProtKB-KW"/>
</dbReference>
<dbReference type="GO" id="GO:0039502">
    <property type="term" value="P:symbiont-mediated suppression of host type I interferon-mediated signaling pathway"/>
    <property type="evidence" value="ECO:0000314"/>
    <property type="project" value="UniProtKB"/>
</dbReference>
<dbReference type="CDD" id="cd21652">
    <property type="entry name" value="ORF4b_HKU4-CoV"/>
    <property type="match status" value="1"/>
</dbReference>
<dbReference type="InterPro" id="IPR044319">
    <property type="entry name" value="ORF4b_HKU4-CoV"/>
</dbReference>
<sequence>MSIVLRLLSVLKHQQNKMQLDLSVNSYKLLDYSMEWSSDSVVLPPTSSDKTVMMPAKATSSRKRHRKPKLQYAKRRFSPVNPNDLVLVQQEPTHCVRLVFPLSKRWIHFDGLVYSLARLNVSMTVDYHVTLALIYAPEAGECFGNFLHLCPLLKDCLLEFKKLCVLGKTLTILASEWPFFTDVKKNKDNLTVPKAVEWLKEHGYEIYNSQLPLHMSLAKLHDLPQAQFAEAAGLCHYFDPREFALPCALEVVKIGGGKVNGRSIPLARFPINNEFKFIPYLYQCV</sequence>
<gene>
    <name type="primary">ORF4b</name>
</gene>
<feature type="chain" id="PRO_0000290268" description="Non-structural protein ORF4b">
    <location>
        <begin position="1"/>
        <end position="285"/>
    </location>
</feature>
<comment type="function">
    <text evidence="2">Plays a role in the inhibition of host innate immunity by inhibiting the interaction between host IKBKE and MAVS. In turn, this inhibition prevents the production of host interferon beta. Additionally, may also interfere with host antiviral response within the nucleus.</text>
</comment>
<comment type="subcellular location">
    <subcellularLocation>
        <location evidence="2">Host nucleus</location>
    </subcellularLocation>
    <subcellularLocation>
        <location evidence="1">Host nucleus</location>
        <location evidence="1">Host nucleolus</location>
    </subcellularLocation>
    <subcellularLocation>
        <location evidence="1">Host cytoplasm</location>
    </subcellularLocation>
    <text evidence="1">Mainly localized in the host nucleus.</text>
</comment>